<organism>
    <name type="scientific">Illicium oligandrum</name>
    <name type="common">Star anise</name>
    <dbReference type="NCBI Taxonomy" id="145286"/>
    <lineage>
        <taxon>Eukaryota</taxon>
        <taxon>Viridiplantae</taxon>
        <taxon>Streptophyta</taxon>
        <taxon>Embryophyta</taxon>
        <taxon>Tracheophyta</taxon>
        <taxon>Spermatophyta</taxon>
        <taxon>Magnoliopsida</taxon>
        <taxon>Austrobaileyales</taxon>
        <taxon>Schisandraceae</taxon>
        <taxon>Illicium</taxon>
    </lineage>
</organism>
<gene>
    <name evidence="2" type="primary">psbD</name>
</gene>
<evidence type="ECO:0000250" key="1">
    <source>
        <dbReference type="UniProtKB" id="P56761"/>
    </source>
</evidence>
<evidence type="ECO:0000255" key="2">
    <source>
        <dbReference type="HAMAP-Rule" id="MF_01383"/>
    </source>
</evidence>
<reference key="1">
    <citation type="journal article" date="2007" name="Mol. Phylogenet. Evol.">
        <title>Phylogenetic and evolutionary implications of complete chloroplast genome sequences of four early-diverging angiosperms: Buxus (Buxaceae), Chloranthus (Chloranthaceae), Dioscorea (Dioscoreaceae), and Illicium (Schisandraceae).</title>
        <authorList>
            <person name="Hansen D.R."/>
            <person name="Dastidar S.G."/>
            <person name="Cai Z."/>
            <person name="Penaflor C."/>
            <person name="Kuehl J.V."/>
            <person name="Boore J.L."/>
            <person name="Jansen R.K."/>
        </authorList>
    </citation>
    <scope>NUCLEOTIDE SEQUENCE [LARGE SCALE GENOMIC DNA]</scope>
</reference>
<accession>A6MMT9</accession>
<feature type="initiator methionine" description="Removed" evidence="1">
    <location>
        <position position="1"/>
    </location>
</feature>
<feature type="chain" id="PRO_0000359657" description="Photosystem II D2 protein">
    <location>
        <begin position="2"/>
        <end position="353"/>
    </location>
</feature>
<feature type="transmembrane region" description="Helical" evidence="2">
    <location>
        <begin position="41"/>
        <end position="61"/>
    </location>
</feature>
<feature type="transmembrane region" description="Helical" evidence="2">
    <location>
        <begin position="125"/>
        <end position="141"/>
    </location>
</feature>
<feature type="transmembrane region" description="Helical" evidence="2">
    <location>
        <begin position="153"/>
        <end position="166"/>
    </location>
</feature>
<feature type="transmembrane region" description="Helical" evidence="2">
    <location>
        <begin position="208"/>
        <end position="228"/>
    </location>
</feature>
<feature type="transmembrane region" description="Helical" evidence="2">
    <location>
        <begin position="279"/>
        <end position="295"/>
    </location>
</feature>
<feature type="binding site" description="axial binding residue" evidence="2">
    <location>
        <position position="118"/>
    </location>
    <ligand>
        <name>chlorophyll a</name>
        <dbReference type="ChEBI" id="CHEBI:58416"/>
        <label>ChlzD2</label>
    </ligand>
    <ligandPart>
        <name>Mg</name>
        <dbReference type="ChEBI" id="CHEBI:25107"/>
    </ligandPart>
</feature>
<feature type="binding site" evidence="2">
    <location>
        <position position="130"/>
    </location>
    <ligand>
        <name>pheophytin a</name>
        <dbReference type="ChEBI" id="CHEBI:136840"/>
        <label>D2</label>
    </ligand>
</feature>
<feature type="binding site" evidence="2">
    <location>
        <position position="143"/>
    </location>
    <ligand>
        <name>pheophytin a</name>
        <dbReference type="ChEBI" id="CHEBI:136840"/>
        <label>D2</label>
    </ligand>
</feature>
<feature type="binding site" description="axial binding residue" evidence="2">
    <location>
        <position position="198"/>
    </location>
    <ligand>
        <name>chlorophyll a</name>
        <dbReference type="ChEBI" id="CHEBI:58416"/>
        <label>PD2</label>
    </ligand>
    <ligandPart>
        <name>Mg</name>
        <dbReference type="ChEBI" id="CHEBI:25107"/>
    </ligandPart>
</feature>
<feature type="binding site" evidence="2">
    <location>
        <position position="215"/>
    </location>
    <ligand>
        <name>a plastoquinone</name>
        <dbReference type="ChEBI" id="CHEBI:17757"/>
        <label>Q(A)</label>
    </ligand>
</feature>
<feature type="binding site" evidence="2">
    <location>
        <position position="215"/>
    </location>
    <ligand>
        <name>Fe cation</name>
        <dbReference type="ChEBI" id="CHEBI:24875"/>
        <note>ligand shared with heterodimeric partner</note>
    </ligand>
</feature>
<feature type="binding site" evidence="2">
    <location>
        <position position="262"/>
    </location>
    <ligand>
        <name>a plastoquinone</name>
        <dbReference type="ChEBI" id="CHEBI:17757"/>
        <label>Q(A)</label>
    </ligand>
</feature>
<feature type="binding site" evidence="2">
    <location>
        <position position="269"/>
    </location>
    <ligand>
        <name>Fe cation</name>
        <dbReference type="ChEBI" id="CHEBI:24875"/>
        <note>ligand shared with heterodimeric partner</note>
    </ligand>
</feature>
<feature type="modified residue" description="N-acetylthreonine" evidence="1">
    <location>
        <position position="2"/>
    </location>
</feature>
<feature type="modified residue" description="Phosphothreonine" evidence="1">
    <location>
        <position position="2"/>
    </location>
</feature>
<geneLocation type="chloroplast"/>
<name>PSBD_ILLOL</name>
<dbReference type="EC" id="1.10.3.9" evidence="2"/>
<dbReference type="EMBL" id="EF380354">
    <property type="protein sequence ID" value="ABQ52514.1"/>
    <property type="molecule type" value="Genomic_DNA"/>
</dbReference>
<dbReference type="RefSeq" id="YP_001294265.1">
    <property type="nucleotide sequence ID" value="NC_009600.1"/>
</dbReference>
<dbReference type="SMR" id="A6MMT9"/>
<dbReference type="GeneID" id="5236734"/>
<dbReference type="GO" id="GO:0009535">
    <property type="term" value="C:chloroplast thylakoid membrane"/>
    <property type="evidence" value="ECO:0007669"/>
    <property type="project" value="UniProtKB-SubCell"/>
</dbReference>
<dbReference type="GO" id="GO:0009523">
    <property type="term" value="C:photosystem II"/>
    <property type="evidence" value="ECO:0007669"/>
    <property type="project" value="UniProtKB-KW"/>
</dbReference>
<dbReference type="GO" id="GO:0016168">
    <property type="term" value="F:chlorophyll binding"/>
    <property type="evidence" value="ECO:0007669"/>
    <property type="project" value="UniProtKB-UniRule"/>
</dbReference>
<dbReference type="GO" id="GO:0045156">
    <property type="term" value="F:electron transporter, transferring electrons within the cyclic electron transport pathway of photosynthesis activity"/>
    <property type="evidence" value="ECO:0007669"/>
    <property type="project" value="InterPro"/>
</dbReference>
<dbReference type="GO" id="GO:0005506">
    <property type="term" value="F:iron ion binding"/>
    <property type="evidence" value="ECO:0007669"/>
    <property type="project" value="UniProtKB-UniRule"/>
</dbReference>
<dbReference type="GO" id="GO:0010242">
    <property type="term" value="F:oxygen evolving activity"/>
    <property type="evidence" value="ECO:0007669"/>
    <property type="project" value="UniProtKB-EC"/>
</dbReference>
<dbReference type="GO" id="GO:0009772">
    <property type="term" value="P:photosynthetic electron transport in photosystem II"/>
    <property type="evidence" value="ECO:0007669"/>
    <property type="project" value="InterPro"/>
</dbReference>
<dbReference type="CDD" id="cd09288">
    <property type="entry name" value="Photosystem-II_D2"/>
    <property type="match status" value="1"/>
</dbReference>
<dbReference type="FunFam" id="1.20.85.10:FF:000001">
    <property type="entry name" value="photosystem II D2 protein-like"/>
    <property type="match status" value="1"/>
</dbReference>
<dbReference type="Gene3D" id="1.20.85.10">
    <property type="entry name" value="Photosystem II protein D1-like"/>
    <property type="match status" value="1"/>
</dbReference>
<dbReference type="HAMAP" id="MF_01383">
    <property type="entry name" value="PSII_PsbD_D2"/>
    <property type="match status" value="1"/>
</dbReference>
<dbReference type="InterPro" id="IPR055266">
    <property type="entry name" value="D1/D2"/>
</dbReference>
<dbReference type="InterPro" id="IPR036854">
    <property type="entry name" value="Photo_II_D1/D2_sf"/>
</dbReference>
<dbReference type="InterPro" id="IPR000484">
    <property type="entry name" value="Photo_RC_L/M"/>
</dbReference>
<dbReference type="InterPro" id="IPR055265">
    <property type="entry name" value="Photo_RC_L/M_CS"/>
</dbReference>
<dbReference type="InterPro" id="IPR005868">
    <property type="entry name" value="PSII_PsbD/D2"/>
</dbReference>
<dbReference type="NCBIfam" id="TIGR01152">
    <property type="entry name" value="psbD"/>
    <property type="match status" value="1"/>
</dbReference>
<dbReference type="PANTHER" id="PTHR33149:SF12">
    <property type="entry name" value="PHOTOSYSTEM II D2 PROTEIN"/>
    <property type="match status" value="1"/>
</dbReference>
<dbReference type="PANTHER" id="PTHR33149">
    <property type="entry name" value="PHOTOSYSTEM II PROTEIN D1"/>
    <property type="match status" value="1"/>
</dbReference>
<dbReference type="Pfam" id="PF00124">
    <property type="entry name" value="Photo_RC"/>
    <property type="match status" value="1"/>
</dbReference>
<dbReference type="PRINTS" id="PR00256">
    <property type="entry name" value="REACTNCENTRE"/>
</dbReference>
<dbReference type="SUPFAM" id="SSF81483">
    <property type="entry name" value="Bacterial photosystem II reaction centre, L and M subunits"/>
    <property type="match status" value="1"/>
</dbReference>
<dbReference type="PROSITE" id="PS00244">
    <property type="entry name" value="REACTION_CENTER"/>
    <property type="match status" value="1"/>
</dbReference>
<sequence>MTIALGRFTKEENDLFDIMDDWLRRDRFVFVGWSGLLLFPCAYFALGGWFTGTTFVTSWYTHGLASSYLEGCNFLTAAVSTPANSLAHSLLLLWGPEAQGDFTRWCQLGGLWTFVALHGAFGLIGFMLRQFELARSVQLRPYNAIAFSAPIAVFVSVFLIYPLGQSGWFFAPSFGVAAIFRFILFFQGFHNWTLNPFHMMGVAGVLGAALLCAIHGATVENTLFEDGDGANTFRAFNPTQAEETYSMVTANRFWSQIFGVAFSNKRWLHFFMLFVPVTGLWMSALGVVGLALNLRAYDFVSQEIRAAEDPEFETFYTKNILLNEGIRAWMAAQDQPHENLIFPEEVLPRGNAL</sequence>
<keyword id="KW-0007">Acetylation</keyword>
<keyword id="KW-0148">Chlorophyll</keyword>
<keyword id="KW-0150">Chloroplast</keyword>
<keyword id="KW-0157">Chromophore</keyword>
<keyword id="KW-0249">Electron transport</keyword>
<keyword id="KW-0408">Iron</keyword>
<keyword id="KW-0460">Magnesium</keyword>
<keyword id="KW-0472">Membrane</keyword>
<keyword id="KW-0479">Metal-binding</keyword>
<keyword id="KW-0560">Oxidoreductase</keyword>
<keyword id="KW-0597">Phosphoprotein</keyword>
<keyword id="KW-0602">Photosynthesis</keyword>
<keyword id="KW-0604">Photosystem II</keyword>
<keyword id="KW-0934">Plastid</keyword>
<keyword id="KW-0793">Thylakoid</keyword>
<keyword id="KW-0812">Transmembrane</keyword>
<keyword id="KW-1133">Transmembrane helix</keyword>
<keyword id="KW-0813">Transport</keyword>
<protein>
    <recommendedName>
        <fullName evidence="2">Photosystem II D2 protein</fullName>
        <shortName evidence="2">PSII D2 protein</shortName>
        <ecNumber evidence="2">1.10.3.9</ecNumber>
    </recommendedName>
    <alternativeName>
        <fullName evidence="2">Photosystem Q(A) protein</fullName>
    </alternativeName>
</protein>
<comment type="function">
    <text evidence="2">Photosystem II (PSII) is a light-driven water:plastoquinone oxidoreductase that uses light energy to abstract electrons from H(2)O, generating O(2) and a proton gradient subsequently used for ATP formation. It consists of a core antenna complex that captures photons, and an electron transfer chain that converts photonic excitation into a charge separation. The D1/D2 (PsbA/PsbD) reaction center heterodimer binds P680, the primary electron donor of PSII as well as several subsequent electron acceptors. D2 is needed for assembly of a stable PSII complex.</text>
</comment>
<comment type="catalytic activity">
    <reaction evidence="2">
        <text>2 a plastoquinone + 4 hnu + 2 H2O = 2 a plastoquinol + O2</text>
        <dbReference type="Rhea" id="RHEA:36359"/>
        <dbReference type="Rhea" id="RHEA-COMP:9561"/>
        <dbReference type="Rhea" id="RHEA-COMP:9562"/>
        <dbReference type="ChEBI" id="CHEBI:15377"/>
        <dbReference type="ChEBI" id="CHEBI:15379"/>
        <dbReference type="ChEBI" id="CHEBI:17757"/>
        <dbReference type="ChEBI" id="CHEBI:30212"/>
        <dbReference type="ChEBI" id="CHEBI:62192"/>
        <dbReference type="EC" id="1.10.3.9"/>
    </reaction>
</comment>
<comment type="cofactor">
    <text evidence="2">The D1/D2 heterodimer binds P680, chlorophylls that are the primary electron donor of PSII, and subsequent electron acceptors. It shares a non-heme iron and each subunit binds pheophytin, quinone, additional chlorophylls, carotenoids and lipids. There is also a Cl(-1) ion associated with D1 and D2, which is required for oxygen evolution. The PSII complex binds additional chlorophylls, carotenoids and specific lipids.</text>
</comment>
<comment type="subunit">
    <text evidence="2">PSII is composed of 1 copy each of membrane proteins PsbA, PsbB, PsbC, PsbD, PsbE, PsbF, PsbH, PsbI, PsbJ, PsbK, PsbL, PsbM, PsbT, PsbX, PsbY, PsbZ, Psb30/Ycf12, at least 3 peripheral proteins of the oxygen-evolving complex and a large number of cofactors. It forms dimeric complexes.</text>
</comment>
<comment type="subcellular location">
    <subcellularLocation>
        <location evidence="2">Plastid</location>
        <location evidence="2">Chloroplast thylakoid membrane</location>
        <topology evidence="2">Multi-pass membrane protein</topology>
    </subcellularLocation>
</comment>
<comment type="miscellaneous">
    <text evidence="2">2 of the reaction center chlorophylls (ChlD1 and ChlD2) are entirely coordinated by water.</text>
</comment>
<comment type="similarity">
    <text evidence="2">Belongs to the reaction center PufL/M/PsbA/D family.</text>
</comment>
<proteinExistence type="inferred from homology"/>